<protein>
    <recommendedName>
        <fullName>BSD domain-containing protein 1</fullName>
    </recommendedName>
</protein>
<reference key="1">
    <citation type="submission" date="2005-03" db="EMBL/GenBank/DDBJ databases">
        <authorList>
            <consortium name="NIH - Xenopus Gene Collection (XGC) project"/>
        </authorList>
    </citation>
    <scope>NUCLEOTIDE SEQUENCE [LARGE SCALE MRNA]</scope>
    <source>
        <tissue>Embryo</tissue>
    </source>
</reference>
<sequence length="412" mass="46009">MAEGEDGTWWRSWLQQSYSSVRDKSAEALEFMKRDLTEFTRVVQHDTACTIAATASVVKDKLVVEGSSGTTDKVKKGLSNFLGVISDTFAPSPDKTIDCDVITLMATPSGTTELYDSTKARLYSLQSDPATYCNEPDGSPAEFDAWLAYWDPEHRKAEISELLVTSPSIRALYTKMVPAAVSHSEFWQRYFYKVHQLEQEEARRDALKQRADQSVHSEEPQWEEEEEDFVGAASAPNFKLEEKYVISPPTIPTLHVEDKSEKMAELNRDHTSITSPSESSESISPITQIANPEYIEQTATKESSPRPLTVKEKNGAGTDESSAHAPVEQITGKSNAQIGTHREDPPSDLRVFELNSDSGKSTPSNNGQKGSSTDVSEDWEKDFDMTEEEVQMALSRVEVSGEVDDEDWENWE</sequence>
<proteinExistence type="evidence at transcript level"/>
<name>BSDC1_XENTR</name>
<accession>Q5BJ78</accession>
<gene>
    <name type="primary">bsdc1</name>
</gene>
<organism>
    <name type="scientific">Xenopus tropicalis</name>
    <name type="common">Western clawed frog</name>
    <name type="synonym">Silurana tropicalis</name>
    <dbReference type="NCBI Taxonomy" id="8364"/>
    <lineage>
        <taxon>Eukaryota</taxon>
        <taxon>Metazoa</taxon>
        <taxon>Chordata</taxon>
        <taxon>Craniata</taxon>
        <taxon>Vertebrata</taxon>
        <taxon>Euteleostomi</taxon>
        <taxon>Amphibia</taxon>
        <taxon>Batrachia</taxon>
        <taxon>Anura</taxon>
        <taxon>Pipoidea</taxon>
        <taxon>Pipidae</taxon>
        <taxon>Xenopodinae</taxon>
        <taxon>Xenopus</taxon>
        <taxon>Silurana</taxon>
    </lineage>
</organism>
<evidence type="ECO:0000255" key="1">
    <source>
        <dbReference type="PROSITE-ProRule" id="PRU00036"/>
    </source>
</evidence>
<evidence type="ECO:0000256" key="2">
    <source>
        <dbReference type="SAM" id="MobiDB-lite"/>
    </source>
</evidence>
<dbReference type="EMBL" id="BC091590">
    <property type="protein sequence ID" value="AAH91590.1"/>
    <property type="molecule type" value="mRNA"/>
</dbReference>
<dbReference type="RefSeq" id="NP_001025634.1">
    <property type="nucleotide sequence ID" value="NM_001030463.1"/>
</dbReference>
<dbReference type="SMR" id="Q5BJ78"/>
<dbReference type="FunCoup" id="Q5BJ78">
    <property type="interactions" value="1615"/>
</dbReference>
<dbReference type="STRING" id="8364.ENSXETP00000053430"/>
<dbReference type="DNASU" id="595022"/>
<dbReference type="GeneID" id="595022"/>
<dbReference type="KEGG" id="xtr:595022"/>
<dbReference type="AGR" id="Xenbase:XB-GENE-5892016"/>
<dbReference type="CTD" id="55108"/>
<dbReference type="Xenbase" id="XB-GENE-5892016">
    <property type="gene designation" value="bsdc1"/>
</dbReference>
<dbReference type="HOGENOM" id="CLU_053864_0_0_1"/>
<dbReference type="InParanoid" id="Q5BJ78"/>
<dbReference type="OrthoDB" id="73788at2759"/>
<dbReference type="Proteomes" id="UP000008143">
    <property type="component" value="Chromosome 2"/>
</dbReference>
<dbReference type="Gene3D" id="1.10.3970.10">
    <property type="entry name" value="BSD domain"/>
    <property type="match status" value="1"/>
</dbReference>
<dbReference type="InterPro" id="IPR005607">
    <property type="entry name" value="BSD_dom"/>
</dbReference>
<dbReference type="InterPro" id="IPR035925">
    <property type="entry name" value="BSD_dom_sf"/>
</dbReference>
<dbReference type="InterPro" id="IPR051494">
    <property type="entry name" value="BSD_domain-containing"/>
</dbReference>
<dbReference type="PANTHER" id="PTHR16019:SF5">
    <property type="entry name" value="BSD DOMAIN-CONTAINING PROTEIN 1"/>
    <property type="match status" value="1"/>
</dbReference>
<dbReference type="PANTHER" id="PTHR16019">
    <property type="entry name" value="SYNAPSE-ASSOCIATED PROTEIN"/>
    <property type="match status" value="1"/>
</dbReference>
<dbReference type="Pfam" id="PF03909">
    <property type="entry name" value="BSD"/>
    <property type="match status" value="1"/>
</dbReference>
<dbReference type="SMART" id="SM00751">
    <property type="entry name" value="BSD"/>
    <property type="match status" value="1"/>
</dbReference>
<dbReference type="SUPFAM" id="SSF140383">
    <property type="entry name" value="BSD domain-like"/>
    <property type="match status" value="1"/>
</dbReference>
<dbReference type="PROSITE" id="PS50858">
    <property type="entry name" value="BSD"/>
    <property type="match status" value="1"/>
</dbReference>
<feature type="chain" id="PRO_0000282645" description="BSD domain-containing protein 1">
    <location>
        <begin position="1"/>
        <end position="412"/>
    </location>
</feature>
<feature type="domain" description="BSD" evidence="1">
    <location>
        <begin position="146"/>
        <end position="198"/>
    </location>
</feature>
<feature type="region of interest" description="Disordered" evidence="2">
    <location>
        <begin position="208"/>
        <end position="228"/>
    </location>
</feature>
<feature type="region of interest" description="Disordered" evidence="2">
    <location>
        <begin position="255"/>
        <end position="383"/>
    </location>
</feature>
<feature type="compositionally biased region" description="Basic and acidic residues" evidence="2">
    <location>
        <begin position="208"/>
        <end position="219"/>
    </location>
</feature>
<feature type="compositionally biased region" description="Basic and acidic residues" evidence="2">
    <location>
        <begin position="255"/>
        <end position="271"/>
    </location>
</feature>
<feature type="compositionally biased region" description="Low complexity" evidence="2">
    <location>
        <begin position="272"/>
        <end position="287"/>
    </location>
</feature>
<feature type="compositionally biased region" description="Basic and acidic residues" evidence="2">
    <location>
        <begin position="340"/>
        <end position="351"/>
    </location>
</feature>
<feature type="compositionally biased region" description="Polar residues" evidence="2">
    <location>
        <begin position="355"/>
        <end position="374"/>
    </location>
</feature>
<keyword id="KW-1185">Reference proteome</keyword>